<proteinExistence type="inferred from homology"/>
<evidence type="ECO:0000255" key="1">
    <source>
        <dbReference type="HAMAP-Rule" id="MF_01599"/>
    </source>
</evidence>
<dbReference type="EMBL" id="AE005674">
    <property type="protein sequence ID" value="AAN42790.2"/>
    <property type="molecule type" value="Genomic_DNA"/>
</dbReference>
<dbReference type="EMBL" id="AE014073">
    <property type="protein sequence ID" value="AAP16681.1"/>
    <property type="molecule type" value="Genomic_DNA"/>
</dbReference>
<dbReference type="RefSeq" id="NP_707083.2">
    <property type="nucleotide sequence ID" value="NC_004337.2"/>
</dbReference>
<dbReference type="RefSeq" id="WP_000406409.1">
    <property type="nucleotide sequence ID" value="NZ_WPGW01000047.1"/>
</dbReference>
<dbReference type="SMR" id="Q83RQ5"/>
<dbReference type="STRING" id="198214.SF1175"/>
<dbReference type="PaxDb" id="198214-SF1175"/>
<dbReference type="GeneID" id="1024112"/>
<dbReference type="KEGG" id="sfl:SF1175"/>
<dbReference type="KEGG" id="sfx:S1263"/>
<dbReference type="PATRIC" id="fig|198214.7.peg.1389"/>
<dbReference type="HOGENOM" id="CLU_041110_0_0_6"/>
<dbReference type="Proteomes" id="UP000001006">
    <property type="component" value="Chromosome"/>
</dbReference>
<dbReference type="Proteomes" id="UP000002673">
    <property type="component" value="Chromosome"/>
</dbReference>
<dbReference type="GO" id="GO:0005886">
    <property type="term" value="C:plasma membrane"/>
    <property type="evidence" value="ECO:0007669"/>
    <property type="project" value="UniProtKB-SubCell"/>
</dbReference>
<dbReference type="GO" id="GO:0015385">
    <property type="term" value="F:sodium:proton antiporter activity"/>
    <property type="evidence" value="ECO:0007669"/>
    <property type="project" value="InterPro"/>
</dbReference>
<dbReference type="HAMAP" id="MF_01599">
    <property type="entry name" value="NhaB"/>
    <property type="match status" value="1"/>
</dbReference>
<dbReference type="InterPro" id="IPR004671">
    <property type="entry name" value="Na+/H+_antiporter_NhaB"/>
</dbReference>
<dbReference type="NCBIfam" id="TIGR00774">
    <property type="entry name" value="NhaB"/>
    <property type="match status" value="1"/>
</dbReference>
<dbReference type="NCBIfam" id="NF007093">
    <property type="entry name" value="PRK09547.1"/>
    <property type="match status" value="1"/>
</dbReference>
<dbReference type="PANTHER" id="PTHR43302:SF1">
    <property type="entry name" value="NA(+)_H(+) ANTIPORTER NHAB"/>
    <property type="match status" value="1"/>
</dbReference>
<dbReference type="PANTHER" id="PTHR43302">
    <property type="entry name" value="TRANSPORTER ARSB-RELATED"/>
    <property type="match status" value="1"/>
</dbReference>
<dbReference type="Pfam" id="PF06450">
    <property type="entry name" value="NhaB"/>
    <property type="match status" value="1"/>
</dbReference>
<organism>
    <name type="scientific">Shigella flexneri</name>
    <dbReference type="NCBI Taxonomy" id="623"/>
    <lineage>
        <taxon>Bacteria</taxon>
        <taxon>Pseudomonadati</taxon>
        <taxon>Pseudomonadota</taxon>
        <taxon>Gammaproteobacteria</taxon>
        <taxon>Enterobacterales</taxon>
        <taxon>Enterobacteriaceae</taxon>
        <taxon>Shigella</taxon>
    </lineage>
</organism>
<comment type="function">
    <text evidence="1">Na(+)/H(+) antiporter that extrudes sodium in exchange for external protons.</text>
</comment>
<comment type="catalytic activity">
    <reaction evidence="1">
        <text>2 Na(+)(in) + 3 H(+)(out) = 2 Na(+)(out) + 3 H(+)(in)</text>
        <dbReference type="Rhea" id="RHEA:29247"/>
        <dbReference type="ChEBI" id="CHEBI:15378"/>
        <dbReference type="ChEBI" id="CHEBI:29101"/>
    </reaction>
    <physiologicalReaction direction="left-to-right" evidence="1">
        <dbReference type="Rhea" id="RHEA:29248"/>
    </physiologicalReaction>
</comment>
<comment type="subcellular location">
    <subcellularLocation>
        <location evidence="1">Cell inner membrane</location>
        <topology evidence="1">Multi-pass membrane protein</topology>
    </subcellularLocation>
</comment>
<comment type="similarity">
    <text evidence="1">Belongs to the NhaB Na(+)/H(+) (TC 2.A.34) antiporter family.</text>
</comment>
<keyword id="KW-0050">Antiport</keyword>
<keyword id="KW-0997">Cell inner membrane</keyword>
<keyword id="KW-1003">Cell membrane</keyword>
<keyword id="KW-0406">Ion transport</keyword>
<keyword id="KW-0472">Membrane</keyword>
<keyword id="KW-1185">Reference proteome</keyword>
<keyword id="KW-0915">Sodium</keyword>
<keyword id="KW-0739">Sodium transport</keyword>
<keyword id="KW-0812">Transmembrane</keyword>
<keyword id="KW-1133">Transmembrane helix</keyword>
<keyword id="KW-0813">Transport</keyword>
<sequence>MEISWGRALWRNFLGQSPDWYKLALIIFLIVNPLIFLISPFVAGWLLVAEFIFTLAMALKCYPLLPGGLLAIEAVFIGMTSAEHVREEVAANLEVLLLLMFMVAGIYFMKQLLLFIFTRLLLSIRSKMLLSLSFCVAAAFLSAFLDALTVVAVVISVAVGFYGIYHRVASSRTEDTDLQDDSHIDKHYNVVLEQFRGFLRSLMMHAGVGTALGGVMTMVGEPQNLIIAKAAGWHFGDFFLRMSPVTVPVLICGLLTCLLVEKLRWFGYGETLPEKVREVLQQFDDQSRHQRTRQDKIRLIVQAIIGVWLVTALALHLAEVGLIGLSVIILATSLTGVTDEHAIGKAFTESLPFTALLTVFFSVVAVIIDQQLFSPIIQFVLQASEHAQLSLFYIFNGLLSSISDNVFVGTIYINEAKAAMESGAITLKQYELLAVAINTGTNLPSVATPNGQAAFLFLLTSALAPLIRLSYGRMVWMALPYTLVLTLVGLLCVEFTLAPVTEWFMQMGWIATL</sequence>
<reference key="1">
    <citation type="journal article" date="2002" name="Nucleic Acids Res.">
        <title>Genome sequence of Shigella flexneri 2a: insights into pathogenicity through comparison with genomes of Escherichia coli K12 and O157.</title>
        <authorList>
            <person name="Jin Q."/>
            <person name="Yuan Z."/>
            <person name="Xu J."/>
            <person name="Wang Y."/>
            <person name="Shen Y."/>
            <person name="Lu W."/>
            <person name="Wang J."/>
            <person name="Liu H."/>
            <person name="Yang J."/>
            <person name="Yang F."/>
            <person name="Zhang X."/>
            <person name="Zhang J."/>
            <person name="Yang G."/>
            <person name="Wu H."/>
            <person name="Qu D."/>
            <person name="Dong J."/>
            <person name="Sun L."/>
            <person name="Xue Y."/>
            <person name="Zhao A."/>
            <person name="Gao Y."/>
            <person name="Zhu J."/>
            <person name="Kan B."/>
            <person name="Ding K."/>
            <person name="Chen S."/>
            <person name="Cheng H."/>
            <person name="Yao Z."/>
            <person name="He B."/>
            <person name="Chen R."/>
            <person name="Ma D."/>
            <person name="Qiang B."/>
            <person name="Wen Y."/>
            <person name="Hou Y."/>
            <person name="Yu J."/>
        </authorList>
    </citation>
    <scope>NUCLEOTIDE SEQUENCE [LARGE SCALE GENOMIC DNA]</scope>
    <source>
        <strain>301 / Serotype 2a</strain>
    </source>
</reference>
<reference key="2">
    <citation type="journal article" date="2003" name="Infect. Immun.">
        <title>Complete genome sequence and comparative genomics of Shigella flexneri serotype 2a strain 2457T.</title>
        <authorList>
            <person name="Wei J."/>
            <person name="Goldberg M.B."/>
            <person name="Burland V."/>
            <person name="Venkatesan M.M."/>
            <person name="Deng W."/>
            <person name="Fournier G."/>
            <person name="Mayhew G.F."/>
            <person name="Plunkett G. III"/>
            <person name="Rose D.J."/>
            <person name="Darling A."/>
            <person name="Mau B."/>
            <person name="Perna N.T."/>
            <person name="Payne S.M."/>
            <person name="Runyen-Janecky L.J."/>
            <person name="Zhou S."/>
            <person name="Schwartz D.C."/>
            <person name="Blattner F.R."/>
        </authorList>
    </citation>
    <scope>NUCLEOTIDE SEQUENCE [LARGE SCALE GENOMIC DNA]</scope>
    <source>
        <strain>ATCC 700930 / 2457T / Serotype 2a</strain>
    </source>
</reference>
<gene>
    <name evidence="1" type="primary">nhaB</name>
    <name type="ordered locus">SF1175</name>
    <name type="ordered locus">S1263</name>
</gene>
<accession>Q83RQ5</accession>
<accession>Q7UCT8</accession>
<protein>
    <recommendedName>
        <fullName evidence="1">Na(+)/H(+) antiporter NhaB</fullName>
    </recommendedName>
    <alternativeName>
        <fullName evidence="1">Sodium/proton antiporter NhaB</fullName>
    </alternativeName>
</protein>
<feature type="chain" id="PRO_0000333141" description="Na(+)/H(+) antiporter NhaB">
    <location>
        <begin position="1"/>
        <end position="513"/>
    </location>
</feature>
<feature type="transmembrane region" description="Helical" evidence="1">
    <location>
        <begin position="23"/>
        <end position="43"/>
    </location>
</feature>
<feature type="transmembrane region" description="Helical" evidence="1">
    <location>
        <begin position="52"/>
        <end position="72"/>
    </location>
</feature>
<feature type="transmembrane region" description="Helical" evidence="1">
    <location>
        <begin position="97"/>
        <end position="117"/>
    </location>
</feature>
<feature type="transmembrane region" description="Helical" evidence="1">
    <location>
        <begin position="120"/>
        <end position="140"/>
    </location>
</feature>
<feature type="transmembrane region" description="Helical" evidence="1">
    <location>
        <begin position="144"/>
        <end position="164"/>
    </location>
</feature>
<feature type="transmembrane region" description="Helical" evidence="1">
    <location>
        <begin position="202"/>
        <end position="222"/>
    </location>
</feature>
<feature type="transmembrane region" description="Helical" evidence="1">
    <location>
        <begin position="238"/>
        <end position="258"/>
    </location>
</feature>
<feature type="transmembrane region" description="Helical" evidence="1">
    <location>
        <begin position="303"/>
        <end position="323"/>
    </location>
</feature>
<feature type="transmembrane region" description="Helical" evidence="1">
    <location>
        <begin position="348"/>
        <end position="368"/>
    </location>
</feature>
<feature type="transmembrane region" description="Helical" evidence="1">
    <location>
        <begin position="391"/>
        <end position="411"/>
    </location>
</feature>
<feature type="transmembrane region" description="Helical" evidence="1">
    <location>
        <begin position="447"/>
        <end position="467"/>
    </location>
</feature>
<feature type="transmembrane region" description="Helical" evidence="1">
    <location>
        <begin position="475"/>
        <end position="495"/>
    </location>
</feature>
<name>NHAB_SHIFL</name>